<accession>Q66I79</accession>
<keyword id="KW-0106">Calcium</keyword>
<keyword id="KW-0109">Calcium transport</keyword>
<keyword id="KW-1003">Cell membrane</keyword>
<keyword id="KW-0256">Endoplasmic reticulum</keyword>
<keyword id="KW-0406">Ion transport</keyword>
<keyword id="KW-0472">Membrane</keyword>
<keyword id="KW-1185">Reference proteome</keyword>
<keyword id="KW-0712">Selenocysteine</keyword>
<keyword id="KW-0812">Transmembrane</keyword>
<keyword id="KW-1133">Transmembrane helix</keyword>
<keyword id="KW-0813">Transport</keyword>
<reference key="1">
    <citation type="submission" date="2004-09" db="EMBL/GenBank/DDBJ databases">
        <authorList>
            <consortium name="NIH - Zebrafish Gene Collection (ZGC) project"/>
        </authorList>
    </citation>
    <scope>NUCLEOTIDE SEQUENCE [LARGE SCALE MRNA]</scope>
    <source>
        <tissue>Liver</tissue>
    </source>
</reference>
<feature type="chain" id="PRO_0000290205" description="Selenoprotein K">
    <location>
        <begin position="1"/>
        <end position="94"/>
    </location>
</feature>
<feature type="transmembrane region" description="Helical" evidence="4">
    <location>
        <begin position="20"/>
        <end position="42"/>
    </location>
</feature>
<feature type="region of interest" description="Disordered" evidence="5">
    <location>
        <begin position="48"/>
        <end position="94"/>
    </location>
</feature>
<feature type="compositionally biased region" description="Polar residues" evidence="5">
    <location>
        <begin position="49"/>
        <end position="58"/>
    </location>
</feature>
<feature type="non-standard amino acid" description="Selenocysteine" evidence="1">
    <location>
        <position position="92"/>
    </location>
</feature>
<comment type="function">
    <text evidence="2 3">Required for Ca(2+) flux in immune cells and plays a role in T-cell proliferation and in T-cell and neutrophil migration (By similarity). Involved in endoplasmic reticulum-associated degradation (ERAD) of soluble glycosylated proteins (By similarity). Required for cell surface expression of CD36 and involved in macrophage uptake of low-density lipoprotein and in foam cell formation (By similarity). Required for palmitoylation (By similarity).</text>
</comment>
<comment type="subcellular location">
    <subcellularLocation>
        <location evidence="3">Endoplasmic reticulum membrane</location>
        <topology evidence="4">Single-pass membrane protein</topology>
    </subcellularLocation>
    <subcellularLocation>
        <location evidence="3">Cell membrane</location>
        <topology evidence="4">Single-pass membrane protein</topology>
    </subcellularLocation>
    <text evidence="3">Probably mainly localized in the ER.</text>
</comment>
<comment type="similarity">
    <text evidence="6">Belongs to the selenoprotein K family.</text>
</comment>
<comment type="sequence caution" evidence="6">
    <conflict type="erroneous termination">
        <sequence resource="EMBL-CDS" id="AAH81491"/>
    </conflict>
    <text>Truncated C-terminus.</text>
</comment>
<proteinExistence type="inferred from homology"/>
<gene>
    <name type="primary">selenok</name>
    <name type="synonym">selk</name>
    <name evidence="7" type="ORF">zgc:103591</name>
</gene>
<sequence>MVYVSNGQVLDSRSRSPWSLSFLTDFFWGAVEFIGLFFQTLVQPDLSKDGNNSASSRFSDGRGPPGFPGRRRMGRINHGAGPTPPPMGGGGUGR</sequence>
<organism>
    <name type="scientific">Danio rerio</name>
    <name type="common">Zebrafish</name>
    <name type="synonym">Brachydanio rerio</name>
    <dbReference type="NCBI Taxonomy" id="7955"/>
    <lineage>
        <taxon>Eukaryota</taxon>
        <taxon>Metazoa</taxon>
        <taxon>Chordata</taxon>
        <taxon>Craniata</taxon>
        <taxon>Vertebrata</taxon>
        <taxon>Euteleostomi</taxon>
        <taxon>Actinopterygii</taxon>
        <taxon>Neopterygii</taxon>
        <taxon>Teleostei</taxon>
        <taxon>Ostariophysi</taxon>
        <taxon>Cypriniformes</taxon>
        <taxon>Danionidae</taxon>
        <taxon>Danioninae</taxon>
        <taxon>Danio</taxon>
    </lineage>
</organism>
<evidence type="ECO:0000250" key="1"/>
<evidence type="ECO:0000250" key="2">
    <source>
        <dbReference type="UniProtKB" id="Q9JLJ1"/>
    </source>
</evidence>
<evidence type="ECO:0000250" key="3">
    <source>
        <dbReference type="UniProtKB" id="Q9Y6D0"/>
    </source>
</evidence>
<evidence type="ECO:0000255" key="4"/>
<evidence type="ECO:0000256" key="5">
    <source>
        <dbReference type="SAM" id="MobiDB-lite"/>
    </source>
</evidence>
<evidence type="ECO:0000305" key="6"/>
<evidence type="ECO:0000312" key="7">
    <source>
        <dbReference type="EMBL" id="AAH81491.1"/>
    </source>
</evidence>
<name>SELK_DANRE</name>
<dbReference type="EMBL" id="BC081491">
    <property type="protein sequence ID" value="AAH81491.1"/>
    <property type="status" value="ALT_SEQ"/>
    <property type="molecule type" value="mRNA"/>
</dbReference>
<dbReference type="RefSeq" id="NP_001004681.2">
    <property type="nucleotide sequence ID" value="NM_001004681.3"/>
</dbReference>
<dbReference type="FunCoup" id="Q66I79">
    <property type="interactions" value="303"/>
</dbReference>
<dbReference type="STRING" id="7955.ENSDARP00000132705"/>
<dbReference type="PaxDb" id="7955-ENSDARP00000066451"/>
<dbReference type="GeneID" id="791738"/>
<dbReference type="KEGG" id="dre:791738"/>
<dbReference type="AGR" id="ZFIN:ZDB-GENE-040912-131"/>
<dbReference type="CTD" id="58515"/>
<dbReference type="ZFIN" id="ZDB-GENE-040912-131">
    <property type="gene designation" value="selenok"/>
</dbReference>
<dbReference type="eggNOG" id="ENOG502S3PW">
    <property type="taxonomic scope" value="Eukaryota"/>
</dbReference>
<dbReference type="InParanoid" id="Q66I79"/>
<dbReference type="OrthoDB" id="167295at2759"/>
<dbReference type="PhylomeDB" id="Q66I79"/>
<dbReference type="PRO" id="PR:Q66I79"/>
<dbReference type="Proteomes" id="UP000000437">
    <property type="component" value="Chromosome 8"/>
</dbReference>
<dbReference type="GO" id="GO:0005783">
    <property type="term" value="C:endoplasmic reticulum"/>
    <property type="evidence" value="ECO:0000250"/>
    <property type="project" value="UniProtKB"/>
</dbReference>
<dbReference type="GO" id="GO:0005789">
    <property type="term" value="C:endoplasmic reticulum membrane"/>
    <property type="evidence" value="ECO:0000250"/>
    <property type="project" value="UniProtKB"/>
</dbReference>
<dbReference type="GO" id="GO:0005794">
    <property type="term" value="C:Golgi apparatus"/>
    <property type="evidence" value="ECO:0000318"/>
    <property type="project" value="GO_Central"/>
</dbReference>
<dbReference type="GO" id="GO:0005886">
    <property type="term" value="C:plasma membrane"/>
    <property type="evidence" value="ECO:0007669"/>
    <property type="project" value="UniProtKB-SubCell"/>
</dbReference>
<dbReference type="GO" id="GO:0006816">
    <property type="term" value="P:calcium ion transport"/>
    <property type="evidence" value="ECO:0000318"/>
    <property type="project" value="GO_Central"/>
</dbReference>
<dbReference type="GO" id="GO:0032469">
    <property type="term" value="P:endoplasmic reticulum calcium ion homeostasis"/>
    <property type="evidence" value="ECO:0000318"/>
    <property type="project" value="GO_Central"/>
</dbReference>
<dbReference type="GO" id="GO:0018345">
    <property type="term" value="P:protein palmitoylation"/>
    <property type="evidence" value="ECO:0000250"/>
    <property type="project" value="UniProtKB"/>
</dbReference>
<dbReference type="InterPro" id="IPR024491">
    <property type="entry name" value="Se_SelK/SelG"/>
</dbReference>
<dbReference type="PANTHER" id="PTHR16875">
    <property type="entry name" value="SELENOPROTEIN K"/>
    <property type="match status" value="1"/>
</dbReference>
<dbReference type="PANTHER" id="PTHR16875:SF0">
    <property type="entry name" value="SELENOPROTEIN K"/>
    <property type="match status" value="1"/>
</dbReference>
<dbReference type="Pfam" id="PF10961">
    <property type="entry name" value="SelK_SelG"/>
    <property type="match status" value="1"/>
</dbReference>
<protein>
    <recommendedName>
        <fullName evidence="3">Selenoprotein K</fullName>
        <shortName>SelK</shortName>
    </recommendedName>
</protein>